<feature type="chain" id="PRO_0000106499" description="Protein 5.3">
    <location>
        <begin position="1"/>
        <end position="118"/>
    </location>
</feature>
<proteinExistence type="predicted"/>
<organism>
    <name type="scientific">Escherichia phage T7</name>
    <name type="common">Bacteriophage T7</name>
    <dbReference type="NCBI Taxonomy" id="10760"/>
    <lineage>
        <taxon>Viruses</taxon>
        <taxon>Duplodnaviria</taxon>
        <taxon>Heunggongvirae</taxon>
        <taxon>Uroviricota</taxon>
        <taxon>Caudoviricetes</taxon>
        <taxon>Autographiviridae</taxon>
        <taxon>Studiervirinae</taxon>
        <taxon>Teseptimavirus</taxon>
        <taxon>Teseptimavirus T7</taxon>
    </lineage>
</organism>
<organismHost>
    <name type="scientific">Escherichia coli</name>
    <dbReference type="NCBI Taxonomy" id="562"/>
</organismHost>
<sequence length="118" mass="13067">MNERHLTGAASEMLVAYKFTKAGYTVYYPMLTQSKEDLVVCKDGKFSKVQVKTATTVQTNTGDAKQVRLGGCGRSEYKDGDFDILAVVVDEDVLIFTWDEVKGKTSMCVGKRNKGIKL</sequence>
<gene>
    <name type="ordered locus">5.3</name>
</gene>
<accession>P03798</accession>
<keyword id="KW-1185">Reference proteome</keyword>
<name>Y53_BPT7</name>
<dbReference type="EMBL" id="V01146">
    <property type="protein sequence ID" value="CAA24413.1"/>
    <property type="molecule type" value="Genomic_DNA"/>
</dbReference>
<dbReference type="PIR" id="A04423">
    <property type="entry name" value="Q5BP37"/>
</dbReference>
<dbReference type="RefSeq" id="NP_041983.1">
    <property type="nucleotide sequence ID" value="NC_001604.1"/>
</dbReference>
<dbReference type="SMR" id="P03798"/>
<dbReference type="MINT" id="P03798"/>
<dbReference type="KEGG" id="vg:1261045"/>
<dbReference type="OrthoDB" id="20257at10239"/>
<dbReference type="Proteomes" id="UP000000840">
    <property type="component" value="Genome"/>
</dbReference>
<dbReference type="GO" id="GO:0003676">
    <property type="term" value="F:nucleic acid binding"/>
    <property type="evidence" value="ECO:0007669"/>
    <property type="project" value="InterPro"/>
</dbReference>
<dbReference type="Gene3D" id="3.40.1350.10">
    <property type="match status" value="1"/>
</dbReference>
<dbReference type="InterPro" id="IPR021671">
    <property type="entry name" value="PD(D/E)XK_Endonuc"/>
</dbReference>
<dbReference type="InterPro" id="IPR011856">
    <property type="entry name" value="tRNA_endonuc-like_dom_sf"/>
</dbReference>
<dbReference type="Pfam" id="PF11645">
    <property type="entry name" value="PDDEXK_5"/>
    <property type="match status" value="1"/>
</dbReference>
<reference key="1">
    <citation type="journal article" date="1983" name="J. Mol. Biol.">
        <title>Complete nucleotide sequence of bacteriophage T7 DNA and the locations of T7 genetic elements.</title>
        <authorList>
            <person name="Dunn J.J."/>
            <person name="Studier F.W."/>
        </authorList>
    </citation>
    <scope>NUCLEOTIDE SEQUENCE [LARGE SCALE GENOMIC DNA]</scope>
</reference>
<protein>
    <recommendedName>
        <fullName>Protein 5.3</fullName>
    </recommendedName>
    <alternativeName>
        <fullName>Gene product 5.3</fullName>
        <shortName>Gp5.3</shortName>
    </alternativeName>
</protein>